<comment type="function">
    <text evidence="1">Methyltransferase required for the conversion of demethylmenaquinol (DMKH2) to menaquinol (MKH2) and the conversion of 2-polyprenyl-6-methoxy-1,4-benzoquinol (DDMQH2) to 2-polyprenyl-3-methyl-6-methoxy-1,4-benzoquinol (DMQH2).</text>
</comment>
<comment type="catalytic activity">
    <reaction evidence="1">
        <text>a 2-demethylmenaquinol + S-adenosyl-L-methionine = a menaquinol + S-adenosyl-L-homocysteine + H(+)</text>
        <dbReference type="Rhea" id="RHEA:42640"/>
        <dbReference type="Rhea" id="RHEA-COMP:9539"/>
        <dbReference type="Rhea" id="RHEA-COMP:9563"/>
        <dbReference type="ChEBI" id="CHEBI:15378"/>
        <dbReference type="ChEBI" id="CHEBI:18151"/>
        <dbReference type="ChEBI" id="CHEBI:55437"/>
        <dbReference type="ChEBI" id="CHEBI:57856"/>
        <dbReference type="ChEBI" id="CHEBI:59789"/>
        <dbReference type="EC" id="2.1.1.163"/>
    </reaction>
</comment>
<comment type="catalytic activity">
    <reaction evidence="1">
        <text>a 2-methoxy-6-(all-trans-polyprenyl)benzene-1,4-diol + S-adenosyl-L-methionine = a 5-methoxy-2-methyl-3-(all-trans-polyprenyl)benzene-1,4-diol + S-adenosyl-L-homocysteine + H(+)</text>
        <dbReference type="Rhea" id="RHEA:28286"/>
        <dbReference type="Rhea" id="RHEA-COMP:10858"/>
        <dbReference type="Rhea" id="RHEA-COMP:10859"/>
        <dbReference type="ChEBI" id="CHEBI:15378"/>
        <dbReference type="ChEBI" id="CHEBI:57856"/>
        <dbReference type="ChEBI" id="CHEBI:59789"/>
        <dbReference type="ChEBI" id="CHEBI:84166"/>
        <dbReference type="ChEBI" id="CHEBI:84167"/>
        <dbReference type="EC" id="2.1.1.201"/>
    </reaction>
</comment>
<comment type="pathway">
    <text evidence="1">Quinol/quinone metabolism; menaquinone biosynthesis; menaquinol from 1,4-dihydroxy-2-naphthoate: step 2/2.</text>
</comment>
<comment type="pathway">
    <text evidence="1">Cofactor biosynthesis; ubiquinone biosynthesis.</text>
</comment>
<comment type="similarity">
    <text evidence="1">Belongs to the class I-like SAM-binding methyltransferase superfamily. MenG/UbiE family.</text>
</comment>
<protein>
    <recommendedName>
        <fullName evidence="1">Ubiquinone/menaquinone biosynthesis C-methyltransferase UbiE</fullName>
        <ecNumber evidence="1">2.1.1.163</ecNumber>
        <ecNumber evidence="1">2.1.1.201</ecNumber>
    </recommendedName>
    <alternativeName>
        <fullName evidence="1">2-methoxy-6-polyprenyl-1,4-benzoquinol methylase</fullName>
    </alternativeName>
    <alternativeName>
        <fullName evidence="1">Demethylmenaquinone methyltransferase</fullName>
    </alternativeName>
</protein>
<keyword id="KW-0474">Menaquinone biosynthesis</keyword>
<keyword id="KW-0489">Methyltransferase</keyword>
<keyword id="KW-0949">S-adenosyl-L-methionine</keyword>
<keyword id="KW-0808">Transferase</keyword>
<keyword id="KW-0831">Ubiquinone biosynthesis</keyword>
<accession>A7MTX1</accession>
<sequence length="259" mass="28837">MTDTSVQSNTALDNDTTHFGFTTVAKDEKVTKVAEVFHSVAAKYDIMNDLMSGGVHRLWKRFTIDCSGARPGQRVLDLGGGTGDLTAKFSRIVGDQGHVILADINNSMLNVGRDKLRDNGIVGNVHYVQANAEELPFPDDYFDVITISFCLRNVTDKDKALRSMFRVLKPGGRLLVLEFSKPILDPLSKVYDAYSFHLLPKMGELVANDADSYRYLAESIRMHPDQATLEGMMKEAGFENTKYYNLTGGIVALHRGYKF</sequence>
<name>UBIE_VIBC1</name>
<reference key="1">
    <citation type="submission" date="2007-08" db="EMBL/GenBank/DDBJ databases">
        <authorList>
            <consortium name="The Vibrio harveyi Genome Sequencing Project"/>
            <person name="Bassler B."/>
            <person name="Clifton S.W."/>
            <person name="Fulton L."/>
            <person name="Delehaunty K."/>
            <person name="Fronick C."/>
            <person name="Harrison M."/>
            <person name="Markivic C."/>
            <person name="Fulton R."/>
            <person name="Tin-Wollam A.-M."/>
            <person name="Shah N."/>
            <person name="Pepin K."/>
            <person name="Nash W."/>
            <person name="Thiruvilangam P."/>
            <person name="Bhonagiri V."/>
            <person name="Waters C."/>
            <person name="Tu K.C."/>
            <person name="Irgon J."/>
            <person name="Wilson R.K."/>
        </authorList>
    </citation>
    <scope>NUCLEOTIDE SEQUENCE [LARGE SCALE GENOMIC DNA]</scope>
    <source>
        <strain>ATCC BAA-1116 / BB120</strain>
    </source>
</reference>
<dbReference type="EC" id="2.1.1.163" evidence="1"/>
<dbReference type="EC" id="2.1.1.201" evidence="1"/>
<dbReference type="EMBL" id="CP000789">
    <property type="protein sequence ID" value="ABU69565.1"/>
    <property type="molecule type" value="Genomic_DNA"/>
</dbReference>
<dbReference type="RefSeq" id="WP_012126746.1">
    <property type="nucleotide sequence ID" value="NC_009783.1"/>
</dbReference>
<dbReference type="SMR" id="A7MTX1"/>
<dbReference type="KEGG" id="vha:VIBHAR_00562"/>
<dbReference type="PATRIC" id="fig|338187.25.peg.2050"/>
<dbReference type="UniPathway" id="UPA00079">
    <property type="reaction ID" value="UER00169"/>
</dbReference>
<dbReference type="UniPathway" id="UPA00232"/>
<dbReference type="Proteomes" id="UP000008152">
    <property type="component" value="Chromosome I"/>
</dbReference>
<dbReference type="GO" id="GO:0008425">
    <property type="term" value="F:2-methoxy-6-polyprenyl-1,4-benzoquinol methyltransferase activity"/>
    <property type="evidence" value="ECO:0007669"/>
    <property type="project" value="UniProtKB-UniRule"/>
</dbReference>
<dbReference type="GO" id="GO:0043770">
    <property type="term" value="F:demethylmenaquinone methyltransferase activity"/>
    <property type="evidence" value="ECO:0007669"/>
    <property type="project" value="UniProtKB-UniRule"/>
</dbReference>
<dbReference type="GO" id="GO:0009060">
    <property type="term" value="P:aerobic respiration"/>
    <property type="evidence" value="ECO:0007669"/>
    <property type="project" value="UniProtKB-UniRule"/>
</dbReference>
<dbReference type="GO" id="GO:0009234">
    <property type="term" value="P:menaquinone biosynthetic process"/>
    <property type="evidence" value="ECO:0007669"/>
    <property type="project" value="UniProtKB-UniRule"/>
</dbReference>
<dbReference type="GO" id="GO:0032259">
    <property type="term" value="P:methylation"/>
    <property type="evidence" value="ECO:0007669"/>
    <property type="project" value="UniProtKB-KW"/>
</dbReference>
<dbReference type="CDD" id="cd02440">
    <property type="entry name" value="AdoMet_MTases"/>
    <property type="match status" value="1"/>
</dbReference>
<dbReference type="FunFam" id="3.40.50.150:FF:000014">
    <property type="entry name" value="Ubiquinone/menaquinone biosynthesis C-methyltransferase UbiE"/>
    <property type="match status" value="1"/>
</dbReference>
<dbReference type="Gene3D" id="3.40.50.150">
    <property type="entry name" value="Vaccinia Virus protein VP39"/>
    <property type="match status" value="1"/>
</dbReference>
<dbReference type="HAMAP" id="MF_01813">
    <property type="entry name" value="MenG_UbiE_methyltr"/>
    <property type="match status" value="1"/>
</dbReference>
<dbReference type="InterPro" id="IPR029063">
    <property type="entry name" value="SAM-dependent_MTases_sf"/>
</dbReference>
<dbReference type="InterPro" id="IPR004033">
    <property type="entry name" value="UbiE/COQ5_MeTrFase"/>
</dbReference>
<dbReference type="InterPro" id="IPR023576">
    <property type="entry name" value="UbiE/COQ5_MeTrFase_CS"/>
</dbReference>
<dbReference type="NCBIfam" id="TIGR01934">
    <property type="entry name" value="MenG_MenH_UbiE"/>
    <property type="match status" value="1"/>
</dbReference>
<dbReference type="NCBIfam" id="NF001240">
    <property type="entry name" value="PRK00216.1-1"/>
    <property type="match status" value="1"/>
</dbReference>
<dbReference type="NCBIfam" id="NF001244">
    <property type="entry name" value="PRK00216.1-5"/>
    <property type="match status" value="1"/>
</dbReference>
<dbReference type="PANTHER" id="PTHR43591:SF24">
    <property type="entry name" value="2-METHOXY-6-POLYPRENYL-1,4-BENZOQUINOL METHYLASE, MITOCHONDRIAL"/>
    <property type="match status" value="1"/>
</dbReference>
<dbReference type="PANTHER" id="PTHR43591">
    <property type="entry name" value="METHYLTRANSFERASE"/>
    <property type="match status" value="1"/>
</dbReference>
<dbReference type="Pfam" id="PF01209">
    <property type="entry name" value="Ubie_methyltran"/>
    <property type="match status" value="1"/>
</dbReference>
<dbReference type="SUPFAM" id="SSF53335">
    <property type="entry name" value="S-adenosyl-L-methionine-dependent methyltransferases"/>
    <property type="match status" value="1"/>
</dbReference>
<dbReference type="PROSITE" id="PS51608">
    <property type="entry name" value="SAM_MT_UBIE"/>
    <property type="match status" value="1"/>
</dbReference>
<dbReference type="PROSITE" id="PS01183">
    <property type="entry name" value="UBIE_1"/>
    <property type="match status" value="1"/>
</dbReference>
<dbReference type="PROSITE" id="PS01184">
    <property type="entry name" value="UBIE_2"/>
    <property type="match status" value="1"/>
</dbReference>
<evidence type="ECO:0000255" key="1">
    <source>
        <dbReference type="HAMAP-Rule" id="MF_01813"/>
    </source>
</evidence>
<organism>
    <name type="scientific">Vibrio campbellii (strain ATCC BAA-1116)</name>
    <dbReference type="NCBI Taxonomy" id="2902295"/>
    <lineage>
        <taxon>Bacteria</taxon>
        <taxon>Pseudomonadati</taxon>
        <taxon>Pseudomonadota</taxon>
        <taxon>Gammaproteobacteria</taxon>
        <taxon>Vibrionales</taxon>
        <taxon>Vibrionaceae</taxon>
        <taxon>Vibrio</taxon>
    </lineage>
</organism>
<feature type="chain" id="PRO_1000056314" description="Ubiquinone/menaquinone biosynthesis C-methyltransferase UbiE">
    <location>
        <begin position="1"/>
        <end position="259"/>
    </location>
</feature>
<feature type="binding site" evidence="1">
    <location>
        <position position="82"/>
    </location>
    <ligand>
        <name>S-adenosyl-L-methionine</name>
        <dbReference type="ChEBI" id="CHEBI:59789"/>
    </ligand>
</feature>
<feature type="binding site" evidence="1">
    <location>
        <position position="103"/>
    </location>
    <ligand>
        <name>S-adenosyl-L-methionine</name>
        <dbReference type="ChEBI" id="CHEBI:59789"/>
    </ligand>
</feature>
<feature type="binding site" evidence="1">
    <location>
        <begin position="131"/>
        <end position="132"/>
    </location>
    <ligand>
        <name>S-adenosyl-L-methionine</name>
        <dbReference type="ChEBI" id="CHEBI:59789"/>
    </ligand>
</feature>
<feature type="binding site" evidence="1">
    <location>
        <position position="148"/>
    </location>
    <ligand>
        <name>S-adenosyl-L-methionine</name>
        <dbReference type="ChEBI" id="CHEBI:59789"/>
    </ligand>
</feature>
<proteinExistence type="inferred from homology"/>
<gene>
    <name evidence="1" type="primary">ubiE</name>
    <name type="ordered locus">VIBHAR_00562</name>
</gene>